<accession>C5D4U0</accession>
<gene>
    <name evidence="1" type="primary">dnaJ</name>
    <name type="ordered locus">GWCH70_2436</name>
</gene>
<comment type="function">
    <text evidence="1">Participates actively in the response to hyperosmotic and heat shock by preventing the aggregation of stress-denatured proteins and by disaggregating proteins, also in an autonomous, DnaK-independent fashion. Unfolded proteins bind initially to DnaJ; upon interaction with the DnaJ-bound protein, DnaK hydrolyzes its bound ATP, resulting in the formation of a stable complex. GrpE releases ADP from DnaK; ATP binding to DnaK triggers the release of the substrate protein, thus completing the reaction cycle. Several rounds of ATP-dependent interactions between DnaJ, DnaK and GrpE are required for fully efficient folding. Also involved, together with DnaK and GrpE, in the DNA replication of plasmids through activation of initiation proteins.</text>
</comment>
<comment type="cofactor">
    <cofactor evidence="1">
        <name>Zn(2+)</name>
        <dbReference type="ChEBI" id="CHEBI:29105"/>
    </cofactor>
    <text evidence="1">Binds 2 Zn(2+) ions per monomer.</text>
</comment>
<comment type="subunit">
    <text evidence="1">Homodimer.</text>
</comment>
<comment type="subcellular location">
    <subcellularLocation>
        <location evidence="1">Cytoplasm</location>
    </subcellularLocation>
</comment>
<comment type="domain">
    <text evidence="1">The J domain is necessary and sufficient to stimulate DnaK ATPase activity. Zinc center 1 plays an important role in the autonomous, DnaK-independent chaperone activity of DnaJ. Zinc center 2 is essential for interaction with DnaK and for DnaJ activity.</text>
</comment>
<comment type="similarity">
    <text evidence="1">Belongs to the DnaJ family.</text>
</comment>
<dbReference type="EMBL" id="CP001638">
    <property type="protein sequence ID" value="ACS25132.1"/>
    <property type="molecule type" value="Genomic_DNA"/>
</dbReference>
<dbReference type="SMR" id="C5D4U0"/>
<dbReference type="STRING" id="471223.GWCH70_2436"/>
<dbReference type="KEGG" id="gwc:GWCH70_2436"/>
<dbReference type="eggNOG" id="COG0484">
    <property type="taxonomic scope" value="Bacteria"/>
</dbReference>
<dbReference type="HOGENOM" id="CLU_017633_0_7_9"/>
<dbReference type="OrthoDB" id="9779889at2"/>
<dbReference type="GO" id="GO:0005737">
    <property type="term" value="C:cytoplasm"/>
    <property type="evidence" value="ECO:0007669"/>
    <property type="project" value="UniProtKB-SubCell"/>
</dbReference>
<dbReference type="GO" id="GO:0005524">
    <property type="term" value="F:ATP binding"/>
    <property type="evidence" value="ECO:0007669"/>
    <property type="project" value="InterPro"/>
</dbReference>
<dbReference type="GO" id="GO:0031072">
    <property type="term" value="F:heat shock protein binding"/>
    <property type="evidence" value="ECO:0007669"/>
    <property type="project" value="InterPro"/>
</dbReference>
<dbReference type="GO" id="GO:0051082">
    <property type="term" value="F:unfolded protein binding"/>
    <property type="evidence" value="ECO:0007669"/>
    <property type="project" value="UniProtKB-UniRule"/>
</dbReference>
<dbReference type="GO" id="GO:0008270">
    <property type="term" value="F:zinc ion binding"/>
    <property type="evidence" value="ECO:0007669"/>
    <property type="project" value="UniProtKB-UniRule"/>
</dbReference>
<dbReference type="GO" id="GO:0051085">
    <property type="term" value="P:chaperone cofactor-dependent protein refolding"/>
    <property type="evidence" value="ECO:0007669"/>
    <property type="project" value="TreeGrafter"/>
</dbReference>
<dbReference type="GO" id="GO:0006260">
    <property type="term" value="P:DNA replication"/>
    <property type="evidence" value="ECO:0007669"/>
    <property type="project" value="UniProtKB-KW"/>
</dbReference>
<dbReference type="GO" id="GO:0042026">
    <property type="term" value="P:protein refolding"/>
    <property type="evidence" value="ECO:0007669"/>
    <property type="project" value="TreeGrafter"/>
</dbReference>
<dbReference type="GO" id="GO:0009408">
    <property type="term" value="P:response to heat"/>
    <property type="evidence" value="ECO:0007669"/>
    <property type="project" value="InterPro"/>
</dbReference>
<dbReference type="CDD" id="cd06257">
    <property type="entry name" value="DnaJ"/>
    <property type="match status" value="1"/>
</dbReference>
<dbReference type="CDD" id="cd10747">
    <property type="entry name" value="DnaJ_C"/>
    <property type="match status" value="1"/>
</dbReference>
<dbReference type="CDD" id="cd10719">
    <property type="entry name" value="DnaJ_zf"/>
    <property type="match status" value="1"/>
</dbReference>
<dbReference type="FunFam" id="1.10.287.110:FF:000031">
    <property type="entry name" value="Molecular chaperone DnaJ"/>
    <property type="match status" value="1"/>
</dbReference>
<dbReference type="FunFam" id="2.10.230.10:FF:000002">
    <property type="entry name" value="Molecular chaperone DnaJ"/>
    <property type="match status" value="1"/>
</dbReference>
<dbReference type="FunFam" id="2.60.260.20:FF:000004">
    <property type="entry name" value="Molecular chaperone DnaJ"/>
    <property type="match status" value="1"/>
</dbReference>
<dbReference type="FunFam" id="2.60.260.20:FF:000009">
    <property type="entry name" value="Putative Mitochondrial DnaJ chaperone"/>
    <property type="match status" value="1"/>
</dbReference>
<dbReference type="Gene3D" id="1.10.287.110">
    <property type="entry name" value="DnaJ domain"/>
    <property type="match status" value="1"/>
</dbReference>
<dbReference type="Gene3D" id="2.10.230.10">
    <property type="entry name" value="Heat shock protein DnaJ, cysteine-rich domain"/>
    <property type="match status" value="1"/>
</dbReference>
<dbReference type="Gene3D" id="2.60.260.20">
    <property type="entry name" value="Urease metallochaperone UreE, N-terminal domain"/>
    <property type="match status" value="2"/>
</dbReference>
<dbReference type="HAMAP" id="MF_01152">
    <property type="entry name" value="DnaJ"/>
    <property type="match status" value="1"/>
</dbReference>
<dbReference type="InterPro" id="IPR012724">
    <property type="entry name" value="DnaJ"/>
</dbReference>
<dbReference type="InterPro" id="IPR002939">
    <property type="entry name" value="DnaJ_C"/>
</dbReference>
<dbReference type="InterPro" id="IPR001623">
    <property type="entry name" value="DnaJ_domain"/>
</dbReference>
<dbReference type="InterPro" id="IPR018253">
    <property type="entry name" value="DnaJ_domain_CS"/>
</dbReference>
<dbReference type="InterPro" id="IPR008971">
    <property type="entry name" value="HSP40/DnaJ_pept-bd"/>
</dbReference>
<dbReference type="InterPro" id="IPR001305">
    <property type="entry name" value="HSP_DnaJ_Cys-rich_dom"/>
</dbReference>
<dbReference type="InterPro" id="IPR036410">
    <property type="entry name" value="HSP_DnaJ_Cys-rich_dom_sf"/>
</dbReference>
<dbReference type="InterPro" id="IPR036869">
    <property type="entry name" value="J_dom_sf"/>
</dbReference>
<dbReference type="NCBIfam" id="TIGR02349">
    <property type="entry name" value="DnaJ_bact"/>
    <property type="match status" value="1"/>
</dbReference>
<dbReference type="NCBIfam" id="NF008035">
    <property type="entry name" value="PRK10767.1"/>
    <property type="match status" value="1"/>
</dbReference>
<dbReference type="NCBIfam" id="NF010869">
    <property type="entry name" value="PRK14276.1"/>
    <property type="match status" value="1"/>
</dbReference>
<dbReference type="NCBIfam" id="NF010873">
    <property type="entry name" value="PRK14280.1"/>
    <property type="match status" value="1"/>
</dbReference>
<dbReference type="PANTHER" id="PTHR43096:SF48">
    <property type="entry name" value="CHAPERONE PROTEIN DNAJ"/>
    <property type="match status" value="1"/>
</dbReference>
<dbReference type="PANTHER" id="PTHR43096">
    <property type="entry name" value="DNAJ HOMOLOG 1, MITOCHONDRIAL-RELATED"/>
    <property type="match status" value="1"/>
</dbReference>
<dbReference type="Pfam" id="PF00226">
    <property type="entry name" value="DnaJ"/>
    <property type="match status" value="1"/>
</dbReference>
<dbReference type="Pfam" id="PF01556">
    <property type="entry name" value="DnaJ_C"/>
    <property type="match status" value="1"/>
</dbReference>
<dbReference type="Pfam" id="PF00684">
    <property type="entry name" value="DnaJ_CXXCXGXG"/>
    <property type="match status" value="1"/>
</dbReference>
<dbReference type="PRINTS" id="PR00625">
    <property type="entry name" value="JDOMAIN"/>
</dbReference>
<dbReference type="SMART" id="SM00271">
    <property type="entry name" value="DnaJ"/>
    <property type="match status" value="1"/>
</dbReference>
<dbReference type="SUPFAM" id="SSF46565">
    <property type="entry name" value="Chaperone J-domain"/>
    <property type="match status" value="1"/>
</dbReference>
<dbReference type="SUPFAM" id="SSF57938">
    <property type="entry name" value="DnaJ/Hsp40 cysteine-rich domain"/>
    <property type="match status" value="1"/>
</dbReference>
<dbReference type="SUPFAM" id="SSF49493">
    <property type="entry name" value="HSP40/DnaJ peptide-binding domain"/>
    <property type="match status" value="2"/>
</dbReference>
<dbReference type="PROSITE" id="PS00636">
    <property type="entry name" value="DNAJ_1"/>
    <property type="match status" value="1"/>
</dbReference>
<dbReference type="PROSITE" id="PS50076">
    <property type="entry name" value="DNAJ_2"/>
    <property type="match status" value="1"/>
</dbReference>
<dbReference type="PROSITE" id="PS51188">
    <property type="entry name" value="ZF_CR"/>
    <property type="match status" value="1"/>
</dbReference>
<name>DNAJ_GEOSW</name>
<keyword id="KW-0143">Chaperone</keyword>
<keyword id="KW-0963">Cytoplasm</keyword>
<keyword id="KW-0235">DNA replication</keyword>
<keyword id="KW-0479">Metal-binding</keyword>
<keyword id="KW-0677">Repeat</keyword>
<keyword id="KW-0346">Stress response</keyword>
<keyword id="KW-0862">Zinc</keyword>
<keyword id="KW-0863">Zinc-finger</keyword>
<reference key="1">
    <citation type="submission" date="2009-06" db="EMBL/GenBank/DDBJ databases">
        <title>Complete sequence of chromosome of Geopacillus sp. WCH70.</title>
        <authorList>
            <consortium name="US DOE Joint Genome Institute"/>
            <person name="Lucas S."/>
            <person name="Copeland A."/>
            <person name="Lapidus A."/>
            <person name="Glavina del Rio T."/>
            <person name="Dalin E."/>
            <person name="Tice H."/>
            <person name="Bruce D."/>
            <person name="Goodwin L."/>
            <person name="Pitluck S."/>
            <person name="Chertkov O."/>
            <person name="Brettin T."/>
            <person name="Detter J.C."/>
            <person name="Han C."/>
            <person name="Larimer F."/>
            <person name="Land M."/>
            <person name="Hauser L."/>
            <person name="Kyrpides N."/>
            <person name="Mikhailova N."/>
            <person name="Brumm P."/>
            <person name="Mead D.A."/>
            <person name="Richardson P."/>
        </authorList>
    </citation>
    <scope>NUCLEOTIDE SEQUENCE [LARGE SCALE GENOMIC DNA]</scope>
    <source>
        <strain>WCH70</strain>
    </source>
</reference>
<organism>
    <name type="scientific">Geobacillus sp. (strain WCH70)</name>
    <dbReference type="NCBI Taxonomy" id="471223"/>
    <lineage>
        <taxon>Bacteria</taxon>
        <taxon>Bacillati</taxon>
        <taxon>Bacillota</taxon>
        <taxon>Bacilli</taxon>
        <taxon>Bacillales</taxon>
        <taxon>Anoxybacillaceae</taxon>
        <taxon>Geobacillus</taxon>
    </lineage>
</organism>
<sequence>MAKRDYYEILGVSKNATKEEIKKAYRKLSKKYHPDINKEPDAAEKFKEIKEAYEVLSDDQKRAHYDQFGHADPNQGFGGFRSDDFDFGGFSGFGGFEDIFSTFFGGGRRRDPNAPRAGADLQYTMTLTFEEAAFGKETDIEIPREETCDTCHGTGAKPGTKKETCSYCHGTGQISTEQSTPFGRIVNRRTCPYCGGTGQYIKEKCTTCGGTGRVKKRKKIHVKIPAGIDDGQQLRVAGQGEPGINGGPPGDLYIVFHVEPHEFFERDGDDIYCEIPLTFAQAALGDEIEVPTLHGKVKLKIPAGTQTGTKFRLKGKGVPNVRGYGYGDQHVIVRVVTPTKLTEKQKQLLREFDQLGGSSMHQGPYGRFFDKVKKAFKGES</sequence>
<protein>
    <recommendedName>
        <fullName evidence="1">Chaperone protein DnaJ</fullName>
    </recommendedName>
</protein>
<feature type="chain" id="PRO_1000213684" description="Chaperone protein DnaJ">
    <location>
        <begin position="1"/>
        <end position="380"/>
    </location>
</feature>
<feature type="domain" description="J" evidence="1">
    <location>
        <begin position="5"/>
        <end position="69"/>
    </location>
</feature>
<feature type="repeat" description="CXXCXGXG motif">
    <location>
        <begin position="148"/>
        <end position="155"/>
    </location>
</feature>
<feature type="repeat" description="CXXCXGXG motif">
    <location>
        <begin position="165"/>
        <end position="172"/>
    </location>
</feature>
<feature type="repeat" description="CXXCXGXG motif">
    <location>
        <begin position="191"/>
        <end position="198"/>
    </location>
</feature>
<feature type="repeat" description="CXXCXGXG motif">
    <location>
        <begin position="205"/>
        <end position="212"/>
    </location>
</feature>
<feature type="zinc finger region" description="CR-type" evidence="1">
    <location>
        <begin position="135"/>
        <end position="217"/>
    </location>
</feature>
<feature type="binding site" evidence="1">
    <location>
        <position position="148"/>
    </location>
    <ligand>
        <name>Zn(2+)</name>
        <dbReference type="ChEBI" id="CHEBI:29105"/>
        <label>1</label>
    </ligand>
</feature>
<feature type="binding site" evidence="1">
    <location>
        <position position="151"/>
    </location>
    <ligand>
        <name>Zn(2+)</name>
        <dbReference type="ChEBI" id="CHEBI:29105"/>
        <label>1</label>
    </ligand>
</feature>
<feature type="binding site" evidence="1">
    <location>
        <position position="165"/>
    </location>
    <ligand>
        <name>Zn(2+)</name>
        <dbReference type="ChEBI" id="CHEBI:29105"/>
        <label>2</label>
    </ligand>
</feature>
<feature type="binding site" evidence="1">
    <location>
        <position position="168"/>
    </location>
    <ligand>
        <name>Zn(2+)</name>
        <dbReference type="ChEBI" id="CHEBI:29105"/>
        <label>2</label>
    </ligand>
</feature>
<feature type="binding site" evidence="1">
    <location>
        <position position="191"/>
    </location>
    <ligand>
        <name>Zn(2+)</name>
        <dbReference type="ChEBI" id="CHEBI:29105"/>
        <label>2</label>
    </ligand>
</feature>
<feature type="binding site" evidence="1">
    <location>
        <position position="194"/>
    </location>
    <ligand>
        <name>Zn(2+)</name>
        <dbReference type="ChEBI" id="CHEBI:29105"/>
        <label>2</label>
    </ligand>
</feature>
<feature type="binding site" evidence="1">
    <location>
        <position position="205"/>
    </location>
    <ligand>
        <name>Zn(2+)</name>
        <dbReference type="ChEBI" id="CHEBI:29105"/>
        <label>1</label>
    </ligand>
</feature>
<feature type="binding site" evidence="1">
    <location>
        <position position="208"/>
    </location>
    <ligand>
        <name>Zn(2+)</name>
        <dbReference type="ChEBI" id="CHEBI:29105"/>
        <label>1</label>
    </ligand>
</feature>
<proteinExistence type="inferred from homology"/>
<evidence type="ECO:0000255" key="1">
    <source>
        <dbReference type="HAMAP-Rule" id="MF_01152"/>
    </source>
</evidence>